<keyword id="KW-0012">Acyltransferase</keyword>
<keyword id="KW-0963">Cytoplasm</keyword>
<keyword id="KW-0808">Transferase</keyword>
<name>LFTR_XANE5</name>
<feature type="chain" id="PRO_0000258111" description="Leucyl/phenylalanyl-tRNA--protein transferase">
    <location>
        <begin position="1"/>
        <end position="250"/>
    </location>
</feature>
<feature type="region of interest" description="Disordered" evidence="2">
    <location>
        <begin position="1"/>
        <end position="21"/>
    </location>
</feature>
<accession>Q3BTY0</accession>
<gene>
    <name evidence="1" type="primary">aat</name>
    <name type="ordered locus">XCV2052</name>
</gene>
<comment type="function">
    <text evidence="1">Functions in the N-end rule pathway of protein degradation where it conjugates Leu, Phe and, less efficiently, Met from aminoacyl-tRNAs to the N-termini of proteins containing an N-terminal arginine or lysine.</text>
</comment>
<comment type="catalytic activity">
    <reaction evidence="1">
        <text>N-terminal L-lysyl-[protein] + L-leucyl-tRNA(Leu) = N-terminal L-leucyl-L-lysyl-[protein] + tRNA(Leu) + H(+)</text>
        <dbReference type="Rhea" id="RHEA:12340"/>
        <dbReference type="Rhea" id="RHEA-COMP:9613"/>
        <dbReference type="Rhea" id="RHEA-COMP:9622"/>
        <dbReference type="Rhea" id="RHEA-COMP:12670"/>
        <dbReference type="Rhea" id="RHEA-COMP:12671"/>
        <dbReference type="ChEBI" id="CHEBI:15378"/>
        <dbReference type="ChEBI" id="CHEBI:65249"/>
        <dbReference type="ChEBI" id="CHEBI:78442"/>
        <dbReference type="ChEBI" id="CHEBI:78494"/>
        <dbReference type="ChEBI" id="CHEBI:133043"/>
        <dbReference type="EC" id="2.3.2.6"/>
    </reaction>
</comment>
<comment type="catalytic activity">
    <reaction evidence="1">
        <text>N-terminal L-arginyl-[protein] + L-leucyl-tRNA(Leu) = N-terminal L-leucyl-L-arginyl-[protein] + tRNA(Leu) + H(+)</text>
        <dbReference type="Rhea" id="RHEA:50416"/>
        <dbReference type="Rhea" id="RHEA-COMP:9613"/>
        <dbReference type="Rhea" id="RHEA-COMP:9622"/>
        <dbReference type="Rhea" id="RHEA-COMP:12672"/>
        <dbReference type="Rhea" id="RHEA-COMP:12673"/>
        <dbReference type="ChEBI" id="CHEBI:15378"/>
        <dbReference type="ChEBI" id="CHEBI:64719"/>
        <dbReference type="ChEBI" id="CHEBI:78442"/>
        <dbReference type="ChEBI" id="CHEBI:78494"/>
        <dbReference type="ChEBI" id="CHEBI:133044"/>
        <dbReference type="EC" id="2.3.2.6"/>
    </reaction>
</comment>
<comment type="catalytic activity">
    <reaction evidence="1">
        <text>L-phenylalanyl-tRNA(Phe) + an N-terminal L-alpha-aminoacyl-[protein] = an N-terminal L-phenylalanyl-L-alpha-aminoacyl-[protein] + tRNA(Phe)</text>
        <dbReference type="Rhea" id="RHEA:43632"/>
        <dbReference type="Rhea" id="RHEA-COMP:9668"/>
        <dbReference type="Rhea" id="RHEA-COMP:9699"/>
        <dbReference type="Rhea" id="RHEA-COMP:10636"/>
        <dbReference type="Rhea" id="RHEA-COMP:10637"/>
        <dbReference type="ChEBI" id="CHEBI:78442"/>
        <dbReference type="ChEBI" id="CHEBI:78531"/>
        <dbReference type="ChEBI" id="CHEBI:78597"/>
        <dbReference type="ChEBI" id="CHEBI:83561"/>
        <dbReference type="EC" id="2.3.2.6"/>
    </reaction>
</comment>
<comment type="subcellular location">
    <subcellularLocation>
        <location evidence="1">Cytoplasm</location>
    </subcellularLocation>
</comment>
<comment type="similarity">
    <text evidence="1">Belongs to the L/F-transferase family.</text>
</comment>
<evidence type="ECO:0000255" key="1">
    <source>
        <dbReference type="HAMAP-Rule" id="MF_00688"/>
    </source>
</evidence>
<evidence type="ECO:0000256" key="2">
    <source>
        <dbReference type="SAM" id="MobiDB-lite"/>
    </source>
</evidence>
<sequence>MTPFRRPTVLGTSASAPFPPAEAALTDPDGLLAVGGDLSPQRLLNAYAHGIFPWYSEGQPILWWSPDPRMVFRTDGVRLSSRFKRQLRASTWTVRADTAFEQVIDACAASPRPGQDGTWITAEMQQAYIALHRLGHAHSIEVFDGARLVGGIYGVAIGRMFFGESMFSGESGGSKVALAALAANLHGRGWPLIDAQVENPHLLSLGAERLPRADFLHQVQRQVALTEPPGSWSARYGEHAASGLCETRLT</sequence>
<proteinExistence type="inferred from homology"/>
<organism>
    <name type="scientific">Xanthomonas euvesicatoria pv. vesicatoria (strain 85-10)</name>
    <name type="common">Xanthomonas campestris pv. vesicatoria</name>
    <dbReference type="NCBI Taxonomy" id="316273"/>
    <lineage>
        <taxon>Bacteria</taxon>
        <taxon>Pseudomonadati</taxon>
        <taxon>Pseudomonadota</taxon>
        <taxon>Gammaproteobacteria</taxon>
        <taxon>Lysobacterales</taxon>
        <taxon>Lysobacteraceae</taxon>
        <taxon>Xanthomonas</taxon>
    </lineage>
</organism>
<protein>
    <recommendedName>
        <fullName evidence="1">Leucyl/phenylalanyl-tRNA--protein transferase</fullName>
        <ecNumber evidence="1">2.3.2.6</ecNumber>
    </recommendedName>
    <alternativeName>
        <fullName evidence="1">L/F-transferase</fullName>
    </alternativeName>
    <alternativeName>
        <fullName evidence="1">Leucyltransferase</fullName>
    </alternativeName>
    <alternativeName>
        <fullName evidence="1">Phenyalanyltransferase</fullName>
    </alternativeName>
</protein>
<reference key="1">
    <citation type="journal article" date="2005" name="J. Bacteriol.">
        <title>Insights into genome plasticity and pathogenicity of the plant pathogenic Bacterium Xanthomonas campestris pv. vesicatoria revealed by the complete genome sequence.</title>
        <authorList>
            <person name="Thieme F."/>
            <person name="Koebnik R."/>
            <person name="Bekel T."/>
            <person name="Berger C."/>
            <person name="Boch J."/>
            <person name="Buettner D."/>
            <person name="Caldana C."/>
            <person name="Gaigalat L."/>
            <person name="Goesmann A."/>
            <person name="Kay S."/>
            <person name="Kirchner O."/>
            <person name="Lanz C."/>
            <person name="Linke B."/>
            <person name="McHardy A.C."/>
            <person name="Meyer F."/>
            <person name="Mittenhuber G."/>
            <person name="Nies D.H."/>
            <person name="Niesbach-Kloesgen U."/>
            <person name="Patschkowski T."/>
            <person name="Rueckert C."/>
            <person name="Rupp O."/>
            <person name="Schneiker S."/>
            <person name="Schuster S.C."/>
            <person name="Vorhoelter F.J."/>
            <person name="Weber E."/>
            <person name="Puehler A."/>
            <person name="Bonas U."/>
            <person name="Bartels D."/>
            <person name="Kaiser O."/>
        </authorList>
    </citation>
    <scope>NUCLEOTIDE SEQUENCE [LARGE SCALE GENOMIC DNA]</scope>
    <source>
        <strain>85-10</strain>
    </source>
</reference>
<dbReference type="EC" id="2.3.2.6" evidence="1"/>
<dbReference type="EMBL" id="AM039952">
    <property type="protein sequence ID" value="CAJ23729.1"/>
    <property type="molecule type" value="Genomic_DNA"/>
</dbReference>
<dbReference type="RefSeq" id="WP_011347300.1">
    <property type="nucleotide sequence ID" value="NZ_CP017190.1"/>
</dbReference>
<dbReference type="SMR" id="Q3BTY0"/>
<dbReference type="STRING" id="456327.BJD11_12170"/>
<dbReference type="KEGG" id="xcv:XCV2052"/>
<dbReference type="eggNOG" id="COG2360">
    <property type="taxonomic scope" value="Bacteria"/>
</dbReference>
<dbReference type="HOGENOM" id="CLU_075045_0_0_6"/>
<dbReference type="Proteomes" id="UP000007069">
    <property type="component" value="Chromosome"/>
</dbReference>
<dbReference type="GO" id="GO:0005737">
    <property type="term" value="C:cytoplasm"/>
    <property type="evidence" value="ECO:0007669"/>
    <property type="project" value="UniProtKB-SubCell"/>
</dbReference>
<dbReference type="GO" id="GO:0008914">
    <property type="term" value="F:leucyl-tRNA--protein transferase activity"/>
    <property type="evidence" value="ECO:0007669"/>
    <property type="project" value="UniProtKB-UniRule"/>
</dbReference>
<dbReference type="GO" id="GO:0030163">
    <property type="term" value="P:protein catabolic process"/>
    <property type="evidence" value="ECO:0007669"/>
    <property type="project" value="UniProtKB-UniRule"/>
</dbReference>
<dbReference type="FunFam" id="3.30.70.3550:FF:000001">
    <property type="entry name" value="Leucyl/phenylalanyl-tRNA--protein transferase"/>
    <property type="match status" value="1"/>
</dbReference>
<dbReference type="Gene3D" id="3.40.630.70">
    <property type="entry name" value="Leucyl/phenylalanyl-tRNA-protein transferase, C-terminal domain"/>
    <property type="match status" value="1"/>
</dbReference>
<dbReference type="Gene3D" id="3.30.70.3550">
    <property type="entry name" value="Leucyl/phenylalanyl-tRNA-protein transferase, N-terminal domain"/>
    <property type="match status" value="1"/>
</dbReference>
<dbReference type="HAMAP" id="MF_00688">
    <property type="entry name" value="Leu_Phe_trans"/>
    <property type="match status" value="1"/>
</dbReference>
<dbReference type="InterPro" id="IPR016181">
    <property type="entry name" value="Acyl_CoA_acyltransferase"/>
</dbReference>
<dbReference type="InterPro" id="IPR004616">
    <property type="entry name" value="Leu/Phe-tRNA_Trfase"/>
</dbReference>
<dbReference type="InterPro" id="IPR042203">
    <property type="entry name" value="Leu/Phe-tRNA_Trfase_C"/>
</dbReference>
<dbReference type="InterPro" id="IPR042221">
    <property type="entry name" value="Leu/Phe-tRNA_Trfase_N"/>
</dbReference>
<dbReference type="NCBIfam" id="TIGR00667">
    <property type="entry name" value="aat"/>
    <property type="match status" value="1"/>
</dbReference>
<dbReference type="PANTHER" id="PTHR30098">
    <property type="entry name" value="LEUCYL/PHENYLALANYL-TRNA--PROTEIN TRANSFERASE"/>
    <property type="match status" value="1"/>
</dbReference>
<dbReference type="PANTHER" id="PTHR30098:SF2">
    <property type="entry name" value="LEUCYL_PHENYLALANYL-TRNA--PROTEIN TRANSFERASE"/>
    <property type="match status" value="1"/>
</dbReference>
<dbReference type="Pfam" id="PF03588">
    <property type="entry name" value="Leu_Phe_trans"/>
    <property type="match status" value="1"/>
</dbReference>
<dbReference type="SUPFAM" id="SSF55729">
    <property type="entry name" value="Acyl-CoA N-acyltransferases (Nat)"/>
    <property type="match status" value="1"/>
</dbReference>